<reference key="1">
    <citation type="submission" date="2005-09" db="EMBL/GenBank/DDBJ databases">
        <title>Complete genome sequence of Clostridium kluyveri and comparative genomics of Clostridia species.</title>
        <authorList>
            <person name="Inui M."/>
            <person name="Nonaka H."/>
            <person name="Shinoda Y."/>
            <person name="Ikenaga Y."/>
            <person name="Abe M."/>
            <person name="Naito K."/>
            <person name="Vertes A.A."/>
            <person name="Yukawa H."/>
        </authorList>
    </citation>
    <scope>NUCLEOTIDE SEQUENCE [LARGE SCALE GENOMIC DNA]</scope>
    <source>
        <strain>NBRC 12016</strain>
    </source>
</reference>
<proteinExistence type="inferred from homology"/>
<gene>
    <name evidence="1" type="primary">rpsT</name>
    <name type="ordered locus">CKR_0807</name>
</gene>
<feature type="chain" id="PRO_1000194236" description="Small ribosomal subunit protein bS20">
    <location>
        <begin position="1"/>
        <end position="88"/>
    </location>
</feature>
<sequence>MANIKSAKKRIKVIKTKTLRNKIIKSSLKTTIKKFLAAVESGNVEEAKVSFTATVKALDMAASKGVIHKNKASRNKSKLALKLNKLTA</sequence>
<evidence type="ECO:0000255" key="1">
    <source>
        <dbReference type="HAMAP-Rule" id="MF_00500"/>
    </source>
</evidence>
<evidence type="ECO:0000305" key="2"/>
<dbReference type="EMBL" id="AP009049">
    <property type="protein sequence ID" value="BAH05858.1"/>
    <property type="molecule type" value="Genomic_DNA"/>
</dbReference>
<dbReference type="RefSeq" id="WP_012101274.1">
    <property type="nucleotide sequence ID" value="NC_011837.1"/>
</dbReference>
<dbReference type="SMR" id="B9E033"/>
<dbReference type="KEGG" id="ckr:CKR_0807"/>
<dbReference type="HOGENOM" id="CLU_160655_0_0_9"/>
<dbReference type="Proteomes" id="UP000007969">
    <property type="component" value="Chromosome"/>
</dbReference>
<dbReference type="GO" id="GO:0005829">
    <property type="term" value="C:cytosol"/>
    <property type="evidence" value="ECO:0007669"/>
    <property type="project" value="TreeGrafter"/>
</dbReference>
<dbReference type="GO" id="GO:0015935">
    <property type="term" value="C:small ribosomal subunit"/>
    <property type="evidence" value="ECO:0007669"/>
    <property type="project" value="TreeGrafter"/>
</dbReference>
<dbReference type="GO" id="GO:0070181">
    <property type="term" value="F:small ribosomal subunit rRNA binding"/>
    <property type="evidence" value="ECO:0007669"/>
    <property type="project" value="TreeGrafter"/>
</dbReference>
<dbReference type="GO" id="GO:0003735">
    <property type="term" value="F:structural constituent of ribosome"/>
    <property type="evidence" value="ECO:0007669"/>
    <property type="project" value="InterPro"/>
</dbReference>
<dbReference type="GO" id="GO:0006412">
    <property type="term" value="P:translation"/>
    <property type="evidence" value="ECO:0007669"/>
    <property type="project" value="UniProtKB-UniRule"/>
</dbReference>
<dbReference type="FunFam" id="1.20.58.110:FF:000001">
    <property type="entry name" value="30S ribosomal protein S20"/>
    <property type="match status" value="1"/>
</dbReference>
<dbReference type="Gene3D" id="1.20.58.110">
    <property type="entry name" value="Ribosomal protein S20"/>
    <property type="match status" value="1"/>
</dbReference>
<dbReference type="HAMAP" id="MF_00500">
    <property type="entry name" value="Ribosomal_bS20"/>
    <property type="match status" value="1"/>
</dbReference>
<dbReference type="InterPro" id="IPR002583">
    <property type="entry name" value="Ribosomal_bS20"/>
</dbReference>
<dbReference type="InterPro" id="IPR036510">
    <property type="entry name" value="Ribosomal_bS20_sf"/>
</dbReference>
<dbReference type="NCBIfam" id="TIGR00029">
    <property type="entry name" value="S20"/>
    <property type="match status" value="1"/>
</dbReference>
<dbReference type="PANTHER" id="PTHR33398">
    <property type="entry name" value="30S RIBOSOMAL PROTEIN S20"/>
    <property type="match status" value="1"/>
</dbReference>
<dbReference type="PANTHER" id="PTHR33398:SF1">
    <property type="entry name" value="SMALL RIBOSOMAL SUBUNIT PROTEIN BS20C"/>
    <property type="match status" value="1"/>
</dbReference>
<dbReference type="Pfam" id="PF01649">
    <property type="entry name" value="Ribosomal_S20p"/>
    <property type="match status" value="1"/>
</dbReference>
<dbReference type="SUPFAM" id="SSF46992">
    <property type="entry name" value="Ribosomal protein S20"/>
    <property type="match status" value="1"/>
</dbReference>
<name>RS20_CLOK1</name>
<protein>
    <recommendedName>
        <fullName evidence="1">Small ribosomal subunit protein bS20</fullName>
    </recommendedName>
    <alternativeName>
        <fullName evidence="2">30S ribosomal protein S20</fullName>
    </alternativeName>
</protein>
<comment type="function">
    <text evidence="1">Binds directly to 16S ribosomal RNA.</text>
</comment>
<comment type="similarity">
    <text evidence="1">Belongs to the bacterial ribosomal protein bS20 family.</text>
</comment>
<accession>B9E033</accession>
<organism>
    <name type="scientific">Clostridium kluyveri (strain NBRC 12016)</name>
    <dbReference type="NCBI Taxonomy" id="583346"/>
    <lineage>
        <taxon>Bacteria</taxon>
        <taxon>Bacillati</taxon>
        <taxon>Bacillota</taxon>
        <taxon>Clostridia</taxon>
        <taxon>Eubacteriales</taxon>
        <taxon>Clostridiaceae</taxon>
        <taxon>Clostridium</taxon>
    </lineage>
</organism>
<keyword id="KW-0687">Ribonucleoprotein</keyword>
<keyword id="KW-0689">Ribosomal protein</keyword>
<keyword id="KW-0694">RNA-binding</keyword>
<keyword id="KW-0699">rRNA-binding</keyword>